<evidence type="ECO:0000255" key="1">
    <source>
        <dbReference type="HAMAP-Rule" id="MF_00158"/>
    </source>
</evidence>
<feature type="chain" id="PRO_0000305390" description="Pantothenate synthetase">
    <location>
        <begin position="1"/>
        <end position="289"/>
    </location>
</feature>
<feature type="active site" description="Proton donor" evidence="1">
    <location>
        <position position="40"/>
    </location>
</feature>
<feature type="binding site" evidence="1">
    <location>
        <begin position="33"/>
        <end position="40"/>
    </location>
    <ligand>
        <name>ATP</name>
        <dbReference type="ChEBI" id="CHEBI:30616"/>
    </ligand>
</feature>
<feature type="binding site" evidence="1">
    <location>
        <position position="70"/>
    </location>
    <ligand>
        <name>(R)-pantoate</name>
        <dbReference type="ChEBI" id="CHEBI:15980"/>
    </ligand>
</feature>
<feature type="binding site" evidence="1">
    <location>
        <position position="70"/>
    </location>
    <ligand>
        <name>beta-alanine</name>
        <dbReference type="ChEBI" id="CHEBI:57966"/>
    </ligand>
</feature>
<feature type="binding site" evidence="1">
    <location>
        <begin position="157"/>
        <end position="160"/>
    </location>
    <ligand>
        <name>ATP</name>
        <dbReference type="ChEBI" id="CHEBI:30616"/>
    </ligand>
</feature>
<feature type="binding site" evidence="1">
    <location>
        <position position="163"/>
    </location>
    <ligand>
        <name>(R)-pantoate</name>
        <dbReference type="ChEBI" id="CHEBI:15980"/>
    </ligand>
</feature>
<feature type="binding site" evidence="1">
    <location>
        <position position="186"/>
    </location>
    <ligand>
        <name>ATP</name>
        <dbReference type="ChEBI" id="CHEBI:30616"/>
    </ligand>
</feature>
<feature type="binding site" evidence="1">
    <location>
        <begin position="194"/>
        <end position="197"/>
    </location>
    <ligand>
        <name>ATP</name>
        <dbReference type="ChEBI" id="CHEBI:30616"/>
    </ligand>
</feature>
<dbReference type="EC" id="6.3.2.1" evidence="1"/>
<dbReference type="EMBL" id="CP000251">
    <property type="protein sequence ID" value="ABC83447.1"/>
    <property type="molecule type" value="Genomic_DNA"/>
</dbReference>
<dbReference type="SMR" id="Q2IFU3"/>
<dbReference type="STRING" id="290397.Adeh_3681"/>
<dbReference type="KEGG" id="ade:Adeh_3681"/>
<dbReference type="eggNOG" id="COG0414">
    <property type="taxonomic scope" value="Bacteria"/>
</dbReference>
<dbReference type="HOGENOM" id="CLU_047148_0_0_7"/>
<dbReference type="OrthoDB" id="9773087at2"/>
<dbReference type="UniPathway" id="UPA00028">
    <property type="reaction ID" value="UER00005"/>
</dbReference>
<dbReference type="Proteomes" id="UP000001935">
    <property type="component" value="Chromosome"/>
</dbReference>
<dbReference type="GO" id="GO:0005829">
    <property type="term" value="C:cytosol"/>
    <property type="evidence" value="ECO:0007669"/>
    <property type="project" value="TreeGrafter"/>
</dbReference>
<dbReference type="GO" id="GO:0005524">
    <property type="term" value="F:ATP binding"/>
    <property type="evidence" value="ECO:0007669"/>
    <property type="project" value="UniProtKB-KW"/>
</dbReference>
<dbReference type="GO" id="GO:0004592">
    <property type="term" value="F:pantoate-beta-alanine ligase activity"/>
    <property type="evidence" value="ECO:0007669"/>
    <property type="project" value="UniProtKB-UniRule"/>
</dbReference>
<dbReference type="GO" id="GO:0015940">
    <property type="term" value="P:pantothenate biosynthetic process"/>
    <property type="evidence" value="ECO:0007669"/>
    <property type="project" value="UniProtKB-UniRule"/>
</dbReference>
<dbReference type="CDD" id="cd00560">
    <property type="entry name" value="PanC"/>
    <property type="match status" value="1"/>
</dbReference>
<dbReference type="FunFam" id="3.30.1300.10:FF:000001">
    <property type="entry name" value="Pantothenate synthetase"/>
    <property type="match status" value="1"/>
</dbReference>
<dbReference type="Gene3D" id="3.40.50.620">
    <property type="entry name" value="HUPs"/>
    <property type="match status" value="1"/>
</dbReference>
<dbReference type="Gene3D" id="3.30.1300.10">
    <property type="entry name" value="Pantoate-beta-alanine ligase, C-terminal domain"/>
    <property type="match status" value="1"/>
</dbReference>
<dbReference type="HAMAP" id="MF_00158">
    <property type="entry name" value="PanC"/>
    <property type="match status" value="1"/>
</dbReference>
<dbReference type="InterPro" id="IPR003721">
    <property type="entry name" value="Pantoate_ligase"/>
</dbReference>
<dbReference type="InterPro" id="IPR042176">
    <property type="entry name" value="Pantoate_ligase_C"/>
</dbReference>
<dbReference type="InterPro" id="IPR014729">
    <property type="entry name" value="Rossmann-like_a/b/a_fold"/>
</dbReference>
<dbReference type="NCBIfam" id="TIGR00018">
    <property type="entry name" value="panC"/>
    <property type="match status" value="1"/>
</dbReference>
<dbReference type="PANTHER" id="PTHR21299">
    <property type="entry name" value="CYTIDYLATE KINASE/PANTOATE-BETA-ALANINE LIGASE"/>
    <property type="match status" value="1"/>
</dbReference>
<dbReference type="PANTHER" id="PTHR21299:SF1">
    <property type="entry name" value="PANTOATE--BETA-ALANINE LIGASE"/>
    <property type="match status" value="1"/>
</dbReference>
<dbReference type="Pfam" id="PF02569">
    <property type="entry name" value="Pantoate_ligase"/>
    <property type="match status" value="1"/>
</dbReference>
<dbReference type="SUPFAM" id="SSF52374">
    <property type="entry name" value="Nucleotidylyl transferase"/>
    <property type="match status" value="1"/>
</dbReference>
<organism>
    <name type="scientific">Anaeromyxobacter dehalogenans (strain 2CP-C)</name>
    <dbReference type="NCBI Taxonomy" id="290397"/>
    <lineage>
        <taxon>Bacteria</taxon>
        <taxon>Pseudomonadati</taxon>
        <taxon>Myxococcota</taxon>
        <taxon>Myxococcia</taxon>
        <taxon>Myxococcales</taxon>
        <taxon>Cystobacterineae</taxon>
        <taxon>Anaeromyxobacteraceae</taxon>
        <taxon>Anaeromyxobacter</taxon>
    </lineage>
</organism>
<proteinExistence type="inferred from homology"/>
<gene>
    <name evidence="1" type="primary">panC</name>
    <name type="ordered locus">Adeh_3681</name>
</gene>
<reference key="1">
    <citation type="submission" date="2006-01" db="EMBL/GenBank/DDBJ databases">
        <title>Complete sequence of Anaeromyxobacter dehalogenans 2CP-C.</title>
        <authorList>
            <person name="Copeland A."/>
            <person name="Lucas S."/>
            <person name="Lapidus A."/>
            <person name="Barry K."/>
            <person name="Detter J.C."/>
            <person name="Glavina T."/>
            <person name="Hammon N."/>
            <person name="Israni S."/>
            <person name="Pitluck S."/>
            <person name="Brettin T."/>
            <person name="Bruce D."/>
            <person name="Han C."/>
            <person name="Tapia R."/>
            <person name="Gilna P."/>
            <person name="Kiss H."/>
            <person name="Schmutz J."/>
            <person name="Larimer F."/>
            <person name="Land M."/>
            <person name="Kyrpides N."/>
            <person name="Anderson I."/>
            <person name="Sanford R.A."/>
            <person name="Ritalahti K.M."/>
            <person name="Thomas H.S."/>
            <person name="Kirby J.R."/>
            <person name="Zhulin I.B."/>
            <person name="Loeffler F.E."/>
            <person name="Richardson P."/>
        </authorList>
    </citation>
    <scope>NUCLEOTIDE SEQUENCE [LARGE SCALE GENOMIC DNA]</scope>
    <source>
        <strain>2CP-C</strain>
    </source>
</reference>
<accession>Q2IFU3</accession>
<name>PANC_ANADE</name>
<keyword id="KW-0067">ATP-binding</keyword>
<keyword id="KW-0963">Cytoplasm</keyword>
<keyword id="KW-0436">Ligase</keyword>
<keyword id="KW-0547">Nucleotide-binding</keyword>
<keyword id="KW-0566">Pantothenate biosynthesis</keyword>
<keyword id="KW-1185">Reference proteome</keyword>
<comment type="function">
    <text evidence="1">Catalyzes the condensation of pantoate with beta-alanine in an ATP-dependent reaction via a pantoyl-adenylate intermediate.</text>
</comment>
<comment type="catalytic activity">
    <reaction evidence="1">
        <text>(R)-pantoate + beta-alanine + ATP = (R)-pantothenate + AMP + diphosphate + H(+)</text>
        <dbReference type="Rhea" id="RHEA:10912"/>
        <dbReference type="ChEBI" id="CHEBI:15378"/>
        <dbReference type="ChEBI" id="CHEBI:15980"/>
        <dbReference type="ChEBI" id="CHEBI:29032"/>
        <dbReference type="ChEBI" id="CHEBI:30616"/>
        <dbReference type="ChEBI" id="CHEBI:33019"/>
        <dbReference type="ChEBI" id="CHEBI:57966"/>
        <dbReference type="ChEBI" id="CHEBI:456215"/>
        <dbReference type="EC" id="6.3.2.1"/>
    </reaction>
</comment>
<comment type="pathway">
    <text evidence="1">Cofactor biosynthesis; (R)-pantothenate biosynthesis; (R)-pantothenate from (R)-pantoate and beta-alanine: step 1/1.</text>
</comment>
<comment type="subunit">
    <text evidence="1">Homodimer.</text>
</comment>
<comment type="subcellular location">
    <subcellularLocation>
        <location evidence="1">Cytoplasm</location>
    </subcellularLocation>
</comment>
<comment type="miscellaneous">
    <text evidence="1">The reaction proceeds by a bi uni uni bi ping pong mechanism.</text>
</comment>
<comment type="similarity">
    <text evidence="1">Belongs to the pantothenate synthetase family.</text>
</comment>
<protein>
    <recommendedName>
        <fullName evidence="1">Pantothenate synthetase</fullName>
        <shortName evidence="1">PS</shortName>
        <ecNumber evidence="1">6.3.2.1</ecNumber>
    </recommendedName>
    <alternativeName>
        <fullName evidence="1">Pantoate--beta-alanine ligase</fullName>
    </alternativeName>
    <alternativeName>
        <fullName evidence="1">Pantoate-activating enzyme</fullName>
    </alternativeName>
</protein>
<sequence length="289" mass="30882">MKTPELITDPAAWQARCTAAREAGTRIALVTTMGYLHEGHLSLMREARRRADAGGRRGLAVGTIFVNPTQFGPTEDLARYPRDLEGDLAKCAAAGLDAVLAPSDPALMFAPGHETWVTVERASQGLDGASRPGHFRGVATVVAKLFNLTRPHVALFGEKDWQQLAVIRAMVRDLAFGIEIVGMPIVREPDGLALSSRNAYLSPDERRRALALSGALAEAREATARGERDAAALRAGARARLEAAGGRVDYVELVHPETLAPVARAEPGTVLLLAASFGTTRLIDNGRLP</sequence>